<sequence length="222" mass="25271">MYSNITKAWHEDPVKEITSKLSKGYFNANKNNKFENERSSEISDKILDKNPKYNFLSTESDLVSLTENNLHLLSNNSAHISDLNSSEFGNYAPVDFATKIKPHNISNKHLPLVSSKDSECDFSMNHIKHCNICYGRLKELINNKVSKKMDEIILDNKIKQIQSFVPSLDNLSKSNLTTDQSMNNQNRNTISNNDLWKTALIIIIGIVIILLLIIVMIKTVCK</sequence>
<organismHost>
    <name type="scientific">Acanthamoeba polyphaga</name>
    <name type="common">Amoeba</name>
    <dbReference type="NCBI Taxonomy" id="5757"/>
</organismHost>
<comment type="subcellular location">
    <subcellularLocation>
        <location evidence="2">Membrane</location>
        <topology evidence="2">Single-pass membrane protein</topology>
    </subcellularLocation>
</comment>
<name>YL448_MIMIV</name>
<accession>Q5UQP0</accession>
<proteinExistence type="predicted"/>
<protein>
    <recommendedName>
        <fullName>Uncharacterized protein L448</fullName>
    </recommendedName>
</protein>
<dbReference type="EMBL" id="AY653733">
    <property type="protein sequence ID" value="AAV50714.1"/>
    <property type="molecule type" value="Genomic_DNA"/>
</dbReference>
<dbReference type="SMR" id="Q5UQP0"/>
<dbReference type="KEGG" id="vg:9925072"/>
<dbReference type="OrthoDB" id="34963at10239"/>
<dbReference type="Proteomes" id="UP000001134">
    <property type="component" value="Genome"/>
</dbReference>
<dbReference type="GO" id="GO:0016020">
    <property type="term" value="C:membrane"/>
    <property type="evidence" value="ECO:0007669"/>
    <property type="project" value="UniProtKB-SubCell"/>
</dbReference>
<keyword id="KW-0325">Glycoprotein</keyword>
<keyword id="KW-0472">Membrane</keyword>
<keyword id="KW-1185">Reference proteome</keyword>
<keyword id="KW-0812">Transmembrane</keyword>
<keyword id="KW-1133">Transmembrane helix</keyword>
<feature type="chain" id="PRO_0000253269" description="Uncharacterized protein L448">
    <location>
        <begin position="1"/>
        <end position="222"/>
    </location>
</feature>
<feature type="transmembrane region" description="Helical" evidence="1">
    <location>
        <begin position="200"/>
        <end position="220"/>
    </location>
</feature>
<feature type="glycosylation site" description="N-linked (GlcNAc...) asparagine; by host" evidence="1">
    <location>
        <position position="4"/>
    </location>
</feature>
<feature type="glycosylation site" description="N-linked (GlcNAc...) asparagine; by host" evidence="1">
    <location>
        <position position="75"/>
    </location>
</feature>
<feature type="glycosylation site" description="N-linked (GlcNAc...) asparagine; by host" evidence="1">
    <location>
        <position position="84"/>
    </location>
</feature>
<feature type="glycosylation site" description="N-linked (GlcNAc...) asparagine; by host" evidence="1">
    <location>
        <position position="104"/>
    </location>
</feature>
<feature type="glycosylation site" description="N-linked (GlcNAc...) asparagine; by host" evidence="1">
    <location>
        <position position="170"/>
    </location>
</feature>
<feature type="glycosylation site" description="N-linked (GlcNAc...) asparagine; by host" evidence="1">
    <location>
        <position position="175"/>
    </location>
</feature>
<organism>
    <name type="scientific">Acanthamoeba polyphaga mimivirus</name>
    <name type="common">APMV</name>
    <dbReference type="NCBI Taxonomy" id="212035"/>
    <lineage>
        <taxon>Viruses</taxon>
        <taxon>Varidnaviria</taxon>
        <taxon>Bamfordvirae</taxon>
        <taxon>Nucleocytoviricota</taxon>
        <taxon>Megaviricetes</taxon>
        <taxon>Imitervirales</taxon>
        <taxon>Mimiviridae</taxon>
        <taxon>Megamimivirinae</taxon>
        <taxon>Mimivirus</taxon>
        <taxon>Mimivirus bradfordmassiliense</taxon>
    </lineage>
</organism>
<reference key="1">
    <citation type="journal article" date="2004" name="Science">
        <title>The 1.2-megabase genome sequence of Mimivirus.</title>
        <authorList>
            <person name="Raoult D."/>
            <person name="Audic S."/>
            <person name="Robert C."/>
            <person name="Abergel C."/>
            <person name="Renesto P."/>
            <person name="Ogata H."/>
            <person name="La Scola B."/>
            <person name="Susan M."/>
            <person name="Claverie J.-M."/>
        </authorList>
    </citation>
    <scope>NUCLEOTIDE SEQUENCE [LARGE SCALE GENOMIC DNA]</scope>
    <source>
        <strain>Rowbotham-Bradford</strain>
    </source>
</reference>
<gene>
    <name type="ordered locus">MIMI_L448</name>
</gene>
<evidence type="ECO:0000255" key="1"/>
<evidence type="ECO:0000305" key="2"/>